<reference key="1">
    <citation type="journal article" date="2006" name="Proc. Natl. Acad. Sci. U.S.A.">
        <title>The complete genome of Rhodococcus sp. RHA1 provides insights into a catabolic powerhouse.</title>
        <authorList>
            <person name="McLeod M.P."/>
            <person name="Warren R.L."/>
            <person name="Hsiao W.W.L."/>
            <person name="Araki N."/>
            <person name="Myhre M."/>
            <person name="Fernandes C."/>
            <person name="Miyazawa D."/>
            <person name="Wong W."/>
            <person name="Lillquist A.L."/>
            <person name="Wang D."/>
            <person name="Dosanjh M."/>
            <person name="Hara H."/>
            <person name="Petrescu A."/>
            <person name="Morin R.D."/>
            <person name="Yang G."/>
            <person name="Stott J.M."/>
            <person name="Schein J.E."/>
            <person name="Shin H."/>
            <person name="Smailus D."/>
            <person name="Siddiqui A.S."/>
            <person name="Marra M.A."/>
            <person name="Jones S.J.M."/>
            <person name="Holt R."/>
            <person name="Brinkman F.S.L."/>
            <person name="Miyauchi K."/>
            <person name="Fukuda M."/>
            <person name="Davies J.E."/>
            <person name="Mohn W.W."/>
            <person name="Eltis L.D."/>
        </authorList>
    </citation>
    <scope>NUCLEOTIDE SEQUENCE [LARGE SCALE GENOMIC DNA]</scope>
    <source>
        <strain>RHA1</strain>
    </source>
</reference>
<comment type="function">
    <text evidence="1">Produces ATP from ADP in the presence of a proton gradient across the membrane. The catalytic sites are hosted primarily by the beta subunits.</text>
</comment>
<comment type="catalytic activity">
    <reaction evidence="1">
        <text>ATP + H2O + 4 H(+)(in) = ADP + phosphate + 5 H(+)(out)</text>
        <dbReference type="Rhea" id="RHEA:57720"/>
        <dbReference type="ChEBI" id="CHEBI:15377"/>
        <dbReference type="ChEBI" id="CHEBI:15378"/>
        <dbReference type="ChEBI" id="CHEBI:30616"/>
        <dbReference type="ChEBI" id="CHEBI:43474"/>
        <dbReference type="ChEBI" id="CHEBI:456216"/>
        <dbReference type="EC" id="7.1.2.2"/>
    </reaction>
</comment>
<comment type="subunit">
    <text evidence="1">F-type ATPases have 2 components, CF(1) - the catalytic core - and CF(0) - the membrane proton channel. CF(1) has five subunits: alpha(3), beta(3), gamma(1), delta(1), epsilon(1). CF(0) has three main subunits: a(1), b(2) and c(9-12). The alpha and beta chains form an alternating ring which encloses part of the gamma chain. CF(1) is attached to CF(0) by a central stalk formed by the gamma and epsilon chains, while a peripheral stalk is formed by the delta and b chains.</text>
</comment>
<comment type="subcellular location">
    <subcellularLocation>
        <location evidence="1">Cell membrane</location>
        <topology evidence="1">Peripheral membrane protein</topology>
    </subcellularLocation>
</comment>
<comment type="similarity">
    <text evidence="1">Belongs to the ATPase alpha/beta chains family.</text>
</comment>
<dbReference type="EC" id="7.1.2.2" evidence="1"/>
<dbReference type="EMBL" id="CP000431">
    <property type="protein sequence ID" value="ABG93287.1"/>
    <property type="molecule type" value="Genomic_DNA"/>
</dbReference>
<dbReference type="RefSeq" id="WP_005252960.1">
    <property type="nucleotide sequence ID" value="NC_008268.1"/>
</dbReference>
<dbReference type="SMR" id="Q0SGP9"/>
<dbReference type="GeneID" id="69893145"/>
<dbReference type="KEGG" id="rha:RHA1_ro01472"/>
<dbReference type="eggNOG" id="COG0055">
    <property type="taxonomic scope" value="Bacteria"/>
</dbReference>
<dbReference type="HOGENOM" id="CLU_022398_0_2_11"/>
<dbReference type="OrthoDB" id="9801639at2"/>
<dbReference type="Proteomes" id="UP000008710">
    <property type="component" value="Chromosome"/>
</dbReference>
<dbReference type="GO" id="GO:0005886">
    <property type="term" value="C:plasma membrane"/>
    <property type="evidence" value="ECO:0007669"/>
    <property type="project" value="UniProtKB-SubCell"/>
</dbReference>
<dbReference type="GO" id="GO:0045259">
    <property type="term" value="C:proton-transporting ATP synthase complex"/>
    <property type="evidence" value="ECO:0007669"/>
    <property type="project" value="UniProtKB-KW"/>
</dbReference>
<dbReference type="GO" id="GO:0005524">
    <property type="term" value="F:ATP binding"/>
    <property type="evidence" value="ECO:0007669"/>
    <property type="project" value="UniProtKB-UniRule"/>
</dbReference>
<dbReference type="GO" id="GO:0016887">
    <property type="term" value="F:ATP hydrolysis activity"/>
    <property type="evidence" value="ECO:0007669"/>
    <property type="project" value="InterPro"/>
</dbReference>
<dbReference type="GO" id="GO:0046933">
    <property type="term" value="F:proton-transporting ATP synthase activity, rotational mechanism"/>
    <property type="evidence" value="ECO:0007669"/>
    <property type="project" value="UniProtKB-UniRule"/>
</dbReference>
<dbReference type="CDD" id="cd18110">
    <property type="entry name" value="ATP-synt_F1_beta_C"/>
    <property type="match status" value="1"/>
</dbReference>
<dbReference type="CDD" id="cd18115">
    <property type="entry name" value="ATP-synt_F1_beta_N"/>
    <property type="match status" value="1"/>
</dbReference>
<dbReference type="CDD" id="cd01133">
    <property type="entry name" value="F1-ATPase_beta_CD"/>
    <property type="match status" value="1"/>
</dbReference>
<dbReference type="FunFam" id="1.10.1140.10:FF:000001">
    <property type="entry name" value="ATP synthase subunit beta"/>
    <property type="match status" value="1"/>
</dbReference>
<dbReference type="FunFam" id="2.40.10.170:FF:000005">
    <property type="entry name" value="ATP synthase subunit beta"/>
    <property type="match status" value="1"/>
</dbReference>
<dbReference type="FunFam" id="3.40.50.300:FF:000004">
    <property type="entry name" value="ATP synthase subunit beta"/>
    <property type="match status" value="1"/>
</dbReference>
<dbReference type="Gene3D" id="2.40.10.170">
    <property type="match status" value="1"/>
</dbReference>
<dbReference type="Gene3D" id="1.10.1140.10">
    <property type="entry name" value="Bovine Mitochondrial F1-atpase, Atp Synthase Beta Chain, Chain D, domain 3"/>
    <property type="match status" value="1"/>
</dbReference>
<dbReference type="Gene3D" id="3.40.50.300">
    <property type="entry name" value="P-loop containing nucleotide triphosphate hydrolases"/>
    <property type="match status" value="1"/>
</dbReference>
<dbReference type="HAMAP" id="MF_01347">
    <property type="entry name" value="ATP_synth_beta_bact"/>
    <property type="match status" value="1"/>
</dbReference>
<dbReference type="InterPro" id="IPR003593">
    <property type="entry name" value="AAA+_ATPase"/>
</dbReference>
<dbReference type="InterPro" id="IPR055190">
    <property type="entry name" value="ATP-synt_VA_C"/>
</dbReference>
<dbReference type="InterPro" id="IPR005722">
    <property type="entry name" value="ATP_synth_F1_bsu"/>
</dbReference>
<dbReference type="InterPro" id="IPR020003">
    <property type="entry name" value="ATPase_a/bsu_AS"/>
</dbReference>
<dbReference type="InterPro" id="IPR050053">
    <property type="entry name" value="ATPase_alpha/beta_chains"/>
</dbReference>
<dbReference type="InterPro" id="IPR004100">
    <property type="entry name" value="ATPase_F1/V1/A1_a/bsu_N"/>
</dbReference>
<dbReference type="InterPro" id="IPR036121">
    <property type="entry name" value="ATPase_F1/V1/A1_a/bsu_N_sf"/>
</dbReference>
<dbReference type="InterPro" id="IPR000194">
    <property type="entry name" value="ATPase_F1/V1/A1_a/bsu_nucl-bd"/>
</dbReference>
<dbReference type="InterPro" id="IPR024034">
    <property type="entry name" value="ATPase_F1/V1_b/a_C"/>
</dbReference>
<dbReference type="InterPro" id="IPR027417">
    <property type="entry name" value="P-loop_NTPase"/>
</dbReference>
<dbReference type="NCBIfam" id="TIGR01039">
    <property type="entry name" value="atpD"/>
    <property type="match status" value="1"/>
</dbReference>
<dbReference type="PANTHER" id="PTHR15184">
    <property type="entry name" value="ATP SYNTHASE"/>
    <property type="match status" value="1"/>
</dbReference>
<dbReference type="PANTHER" id="PTHR15184:SF71">
    <property type="entry name" value="ATP SYNTHASE SUBUNIT BETA, MITOCHONDRIAL"/>
    <property type="match status" value="1"/>
</dbReference>
<dbReference type="Pfam" id="PF00006">
    <property type="entry name" value="ATP-synt_ab"/>
    <property type="match status" value="1"/>
</dbReference>
<dbReference type="Pfam" id="PF02874">
    <property type="entry name" value="ATP-synt_ab_N"/>
    <property type="match status" value="1"/>
</dbReference>
<dbReference type="Pfam" id="PF22919">
    <property type="entry name" value="ATP-synt_VA_C"/>
    <property type="match status" value="1"/>
</dbReference>
<dbReference type="SMART" id="SM00382">
    <property type="entry name" value="AAA"/>
    <property type="match status" value="1"/>
</dbReference>
<dbReference type="SUPFAM" id="SSF47917">
    <property type="entry name" value="C-terminal domain of alpha and beta subunits of F1 ATP synthase"/>
    <property type="match status" value="1"/>
</dbReference>
<dbReference type="SUPFAM" id="SSF50615">
    <property type="entry name" value="N-terminal domain of alpha and beta subunits of F1 ATP synthase"/>
    <property type="match status" value="1"/>
</dbReference>
<dbReference type="SUPFAM" id="SSF52540">
    <property type="entry name" value="P-loop containing nucleoside triphosphate hydrolases"/>
    <property type="match status" value="1"/>
</dbReference>
<dbReference type="PROSITE" id="PS00152">
    <property type="entry name" value="ATPASE_ALPHA_BETA"/>
    <property type="match status" value="1"/>
</dbReference>
<protein>
    <recommendedName>
        <fullName evidence="1">ATP synthase subunit beta</fullName>
        <ecNumber evidence="1">7.1.2.2</ecNumber>
    </recommendedName>
    <alternativeName>
        <fullName evidence="1">ATP synthase F1 sector subunit beta</fullName>
    </alternativeName>
    <alternativeName>
        <fullName evidence="1">F-ATPase subunit beta</fullName>
    </alternativeName>
</protein>
<gene>
    <name evidence="1" type="primary">atpD</name>
    <name type="ordered locus">RHA1_ro01472</name>
</gene>
<feature type="chain" id="PRO_0000254355" description="ATP synthase subunit beta">
    <location>
        <begin position="1"/>
        <end position="483"/>
    </location>
</feature>
<feature type="binding site" evidence="1">
    <location>
        <begin position="169"/>
        <end position="176"/>
    </location>
    <ligand>
        <name>ATP</name>
        <dbReference type="ChEBI" id="CHEBI:30616"/>
    </ligand>
</feature>
<accession>Q0SGP9</accession>
<keyword id="KW-0066">ATP synthesis</keyword>
<keyword id="KW-0067">ATP-binding</keyword>
<keyword id="KW-1003">Cell membrane</keyword>
<keyword id="KW-0139">CF(1)</keyword>
<keyword id="KW-0375">Hydrogen ion transport</keyword>
<keyword id="KW-0406">Ion transport</keyword>
<keyword id="KW-0472">Membrane</keyword>
<keyword id="KW-0547">Nucleotide-binding</keyword>
<keyword id="KW-1278">Translocase</keyword>
<keyword id="KW-0813">Transport</keyword>
<proteinExistence type="inferred from homology"/>
<evidence type="ECO:0000255" key="1">
    <source>
        <dbReference type="HAMAP-Rule" id="MF_01347"/>
    </source>
</evidence>
<organism>
    <name type="scientific">Rhodococcus jostii (strain RHA1)</name>
    <dbReference type="NCBI Taxonomy" id="101510"/>
    <lineage>
        <taxon>Bacteria</taxon>
        <taxon>Bacillati</taxon>
        <taxon>Actinomycetota</taxon>
        <taxon>Actinomycetes</taxon>
        <taxon>Mycobacteriales</taxon>
        <taxon>Nocardiaceae</taxon>
        <taxon>Rhodococcus</taxon>
    </lineage>
</organism>
<sequence>MTAAVTENNGAGSGSSVAGRVVRVIGPVVDVEFPRGAIPELFNALHAEITLPSVAKTLTLEVAQHLGDNLVRTVSMQPTDGLIRGTSVSDTGKPISVPVGDVVKGHVFNALGDCLDAPGTGRDGEQWGIHRKPPAFDQLEGKTEILETGIKVIDLLTPYVKGGKIGLFGGAGVGKTVLIQEMITRIAREFSGTSVFAGVGERTREGTDLHLEMEEMGVLQDTALVFGQMDEPPGTRMRVALSALTMAEYFRDVQGQDVLLFIDNIFRFTQAGSEVSTLLGRMPSAVGYQPTLADEMGELQERITSTRGRSITSLQAIYVPADDYTDPAPATTFAHLDATTELSRPISQMGIYPAVDPLTSTSRILEPGIVGAEHFRVANEVKRILQKYKELQDIIAILGMDELQEEDKVLVGRARRLQKFLGQNFIVAEKFTGEPGSVVPLRDTIEAFDRICKGEFDHLPEQAFNSCGGLDDVEAAAKKIAGK</sequence>
<name>ATPB_RHOJR</name>